<sequence>MEEDDSYVPSDLTAEERQELENIRRRKQELLADIQRLKDEIAEVANEIENLGSTEERKNMQRNKQVAMGRKKFNMDPKKGIQFLIENDLLKNTCEDIAQFLYKGEGLNKTAIGDYLGERDEFNIQVLHAFVELHEFTDLNLVQALRQFLWSFRLPGEAQKIDRMMEAFAQRYCQCNNGVFQSTDTCYVLSFAIIMLNTSLHNPNVKDKPTVERFIAMNRGINDGGDLPEELLRNLYESIKNEPFKIPEDDGNDLTHTFFNPDREGWLLKLGGGRVKTWKRRWFILTDNCLYYFEYTTDKEPRGIIPLENLSIREVEDSKKPNCFELYIPDNKDQVIKACKTEADGRVVEGNHTVYRISAPTPEEKEEWIKCIKAAISRDPFYEMLAARKKKVSSTKRH</sequence>
<proteinExistence type="evidence at protein level"/>
<evidence type="ECO:0000250" key="1"/>
<evidence type="ECO:0000250" key="2">
    <source>
        <dbReference type="UniProtKB" id="Q9QX11"/>
    </source>
</evidence>
<evidence type="ECO:0000255" key="3"/>
<evidence type="ECO:0000255" key="4">
    <source>
        <dbReference type="PROSITE-ProRule" id="PRU00145"/>
    </source>
</evidence>
<evidence type="ECO:0000255" key="5">
    <source>
        <dbReference type="PROSITE-ProRule" id="PRU00189"/>
    </source>
</evidence>
<evidence type="ECO:0000269" key="6">
    <source>
    </source>
</evidence>
<evidence type="ECO:0000269" key="7">
    <source>
    </source>
</evidence>
<evidence type="ECO:0000269" key="8">
    <source>
    </source>
</evidence>
<evidence type="ECO:0000269" key="9">
    <source>
    </source>
</evidence>
<evidence type="ECO:0000269" key="10">
    <source>
    </source>
</evidence>
<evidence type="ECO:0000269" key="11">
    <source>
    </source>
</evidence>
<evidence type="ECO:0000303" key="12">
    <source>
    </source>
</evidence>
<evidence type="ECO:0000305" key="13"/>
<evidence type="ECO:0000312" key="14">
    <source>
        <dbReference type="HGNC" id="HGNC:9501"/>
    </source>
</evidence>
<evidence type="ECO:0007744" key="15">
    <source>
    </source>
</evidence>
<evidence type="ECO:0007829" key="16">
    <source>
        <dbReference type="PDB" id="1BC9"/>
    </source>
</evidence>
<evidence type="ECO:0007829" key="17">
    <source>
        <dbReference type="PDB" id="4A4P"/>
    </source>
</evidence>
<dbReference type="EMBL" id="M85169">
    <property type="protein sequence ID" value="AAA36602.1"/>
    <property type="molecule type" value="mRNA"/>
</dbReference>
<dbReference type="EMBL" id="AK293894">
    <property type="protein sequence ID" value="BAH11620.1"/>
    <property type="molecule type" value="mRNA"/>
</dbReference>
<dbReference type="EMBL" id="AK316277">
    <property type="protein sequence ID" value="BAH14648.1"/>
    <property type="molecule type" value="mRNA"/>
</dbReference>
<dbReference type="EMBL" id="AC022966">
    <property type="status" value="NOT_ANNOTATED_CDS"/>
    <property type="molecule type" value="Genomic_DNA"/>
</dbReference>
<dbReference type="EMBL" id="AC099804">
    <property type="status" value="NOT_ANNOTATED_CDS"/>
    <property type="molecule type" value="Genomic_DNA"/>
</dbReference>
<dbReference type="EMBL" id="BC038385">
    <property type="protein sequence ID" value="AAH38385.1"/>
    <property type="molecule type" value="mRNA"/>
</dbReference>
<dbReference type="EMBL" id="BC050452">
    <property type="protein sequence ID" value="AAH50452.1"/>
    <property type="molecule type" value="mRNA"/>
</dbReference>
<dbReference type="EMBL" id="AF125362">
    <property type="protein sequence ID" value="AAF37737.1"/>
    <property type="molecule type" value="Genomic_DNA"/>
</dbReference>
<dbReference type="EMBL" id="AF125350">
    <property type="protein sequence ID" value="AAF37737.1"/>
    <property type="status" value="JOINED"/>
    <property type="molecule type" value="Genomic_DNA"/>
</dbReference>
<dbReference type="EMBL" id="AF125351">
    <property type="protein sequence ID" value="AAF37737.1"/>
    <property type="status" value="JOINED"/>
    <property type="molecule type" value="Genomic_DNA"/>
</dbReference>
<dbReference type="EMBL" id="AF125352">
    <property type="protein sequence ID" value="AAF37737.1"/>
    <property type="status" value="JOINED"/>
    <property type="molecule type" value="Genomic_DNA"/>
</dbReference>
<dbReference type="EMBL" id="AF125353">
    <property type="protein sequence ID" value="AAF37737.1"/>
    <property type="status" value="JOINED"/>
    <property type="molecule type" value="Genomic_DNA"/>
</dbReference>
<dbReference type="EMBL" id="AF125354">
    <property type="protein sequence ID" value="AAF37737.1"/>
    <property type="status" value="JOINED"/>
    <property type="molecule type" value="Genomic_DNA"/>
</dbReference>
<dbReference type="EMBL" id="AF125355">
    <property type="protein sequence ID" value="AAF37737.1"/>
    <property type="status" value="JOINED"/>
    <property type="molecule type" value="Genomic_DNA"/>
</dbReference>
<dbReference type="EMBL" id="AF125356">
    <property type="protein sequence ID" value="AAF37737.1"/>
    <property type="status" value="JOINED"/>
    <property type="molecule type" value="Genomic_DNA"/>
</dbReference>
<dbReference type="EMBL" id="AF125357">
    <property type="protein sequence ID" value="AAF37737.1"/>
    <property type="status" value="JOINED"/>
    <property type="molecule type" value="Genomic_DNA"/>
</dbReference>
<dbReference type="EMBL" id="AF125359">
    <property type="protein sequence ID" value="AAF37737.1"/>
    <property type="status" value="JOINED"/>
    <property type="molecule type" value="Genomic_DNA"/>
</dbReference>
<dbReference type="EMBL" id="AF125360">
    <property type="protein sequence ID" value="AAF37737.1"/>
    <property type="status" value="JOINED"/>
    <property type="molecule type" value="Genomic_DNA"/>
</dbReference>
<dbReference type="EMBL" id="AF125361">
    <property type="protein sequence ID" value="AAF37737.1"/>
    <property type="status" value="JOINED"/>
    <property type="molecule type" value="Genomic_DNA"/>
</dbReference>
<dbReference type="EMBL" id="AF125362">
    <property type="protein sequence ID" value="AAF37738.1"/>
    <property type="molecule type" value="Genomic_DNA"/>
</dbReference>
<dbReference type="EMBL" id="AF125350">
    <property type="protein sequence ID" value="AAF37738.1"/>
    <property type="status" value="JOINED"/>
    <property type="molecule type" value="Genomic_DNA"/>
</dbReference>
<dbReference type="EMBL" id="AF125351">
    <property type="protein sequence ID" value="AAF37738.1"/>
    <property type="status" value="JOINED"/>
    <property type="molecule type" value="Genomic_DNA"/>
</dbReference>
<dbReference type="EMBL" id="AF125352">
    <property type="protein sequence ID" value="AAF37738.1"/>
    <property type="status" value="JOINED"/>
    <property type="molecule type" value="Genomic_DNA"/>
</dbReference>
<dbReference type="EMBL" id="AF125353">
    <property type="protein sequence ID" value="AAF37738.1"/>
    <property type="status" value="JOINED"/>
    <property type="molecule type" value="Genomic_DNA"/>
</dbReference>
<dbReference type="EMBL" id="AF125354">
    <property type="protein sequence ID" value="AAF37738.1"/>
    <property type="status" value="JOINED"/>
    <property type="molecule type" value="Genomic_DNA"/>
</dbReference>
<dbReference type="EMBL" id="AF125355">
    <property type="protein sequence ID" value="AAF37738.1"/>
    <property type="status" value="JOINED"/>
    <property type="molecule type" value="Genomic_DNA"/>
</dbReference>
<dbReference type="EMBL" id="AF125356">
    <property type="protein sequence ID" value="AAF37738.1"/>
    <property type="status" value="JOINED"/>
    <property type="molecule type" value="Genomic_DNA"/>
</dbReference>
<dbReference type="EMBL" id="AF125357">
    <property type="protein sequence ID" value="AAF37738.1"/>
    <property type="status" value="JOINED"/>
    <property type="molecule type" value="Genomic_DNA"/>
</dbReference>
<dbReference type="EMBL" id="AF125358">
    <property type="protein sequence ID" value="AAF37738.1"/>
    <property type="status" value="JOINED"/>
    <property type="molecule type" value="Genomic_DNA"/>
</dbReference>
<dbReference type="EMBL" id="AF125359">
    <property type="protein sequence ID" value="AAF37738.1"/>
    <property type="status" value="JOINED"/>
    <property type="molecule type" value="Genomic_DNA"/>
</dbReference>
<dbReference type="EMBL" id="AF125360">
    <property type="protein sequence ID" value="AAF37738.1"/>
    <property type="status" value="JOINED"/>
    <property type="molecule type" value="Genomic_DNA"/>
</dbReference>
<dbReference type="EMBL" id="AF125361">
    <property type="protein sequence ID" value="AAF37738.1"/>
    <property type="status" value="JOINED"/>
    <property type="molecule type" value="Genomic_DNA"/>
</dbReference>
<dbReference type="CCDS" id="CCDS32754.1">
    <molecule id="Q15438-2"/>
</dbReference>
<dbReference type="CCDS" id="CCDS42392.3">
    <molecule id="Q15438-1"/>
</dbReference>
<dbReference type="CCDS" id="CCDS86644.1">
    <molecule id="Q15438-3"/>
</dbReference>
<dbReference type="PIR" id="S24168">
    <property type="entry name" value="S24168"/>
</dbReference>
<dbReference type="RefSeq" id="NP_001278947.1">
    <molecule id="Q15438-3"/>
    <property type="nucleotide sequence ID" value="NM_001292018.4"/>
</dbReference>
<dbReference type="RefSeq" id="NP_001278948.1">
    <molecule id="Q15438-3"/>
    <property type="nucleotide sequence ID" value="NM_001292019.4"/>
</dbReference>
<dbReference type="RefSeq" id="NP_004753.1">
    <molecule id="Q15438-1"/>
    <property type="nucleotide sequence ID" value="NM_004762.6"/>
</dbReference>
<dbReference type="RefSeq" id="NP_059430.2">
    <molecule id="Q15438-2"/>
    <property type="nucleotide sequence ID" value="NM_017456.4"/>
</dbReference>
<dbReference type="RefSeq" id="XP_011523779.1">
    <molecule id="Q15438-3"/>
    <property type="nucleotide sequence ID" value="XM_011525477.2"/>
</dbReference>
<dbReference type="RefSeq" id="XP_047293035.1">
    <molecule id="Q15438-3"/>
    <property type="nucleotide sequence ID" value="XM_047437079.1"/>
</dbReference>
<dbReference type="RefSeq" id="XP_047293036.1">
    <molecule id="Q15438-3"/>
    <property type="nucleotide sequence ID" value="XM_047437080.1"/>
</dbReference>
<dbReference type="RefSeq" id="XP_047293037.1">
    <molecule id="Q15438-3"/>
    <property type="nucleotide sequence ID" value="XM_047437081.1"/>
</dbReference>
<dbReference type="RefSeq" id="XP_054173781.1">
    <molecule id="Q15438-3"/>
    <property type="nucleotide sequence ID" value="XM_054317806.1"/>
</dbReference>
<dbReference type="RefSeq" id="XP_054173782.1">
    <molecule id="Q15438-3"/>
    <property type="nucleotide sequence ID" value="XM_054317807.1"/>
</dbReference>
<dbReference type="RefSeq" id="XP_054173783.1">
    <molecule id="Q15438-3"/>
    <property type="nucleotide sequence ID" value="XM_054317808.1"/>
</dbReference>
<dbReference type="PDB" id="1BC9">
    <property type="method" value="NMR"/>
    <property type="chains" value="A=58-256"/>
</dbReference>
<dbReference type="PDB" id="4A4P">
    <property type="method" value="X-ray"/>
    <property type="resolution" value="2.00 A"/>
    <property type="chains" value="A/B=63-248"/>
</dbReference>
<dbReference type="PDBsum" id="1BC9"/>
<dbReference type="PDBsum" id="4A4P"/>
<dbReference type="SMR" id="Q15438"/>
<dbReference type="BioGRID" id="114688">
    <property type="interactions" value="54"/>
</dbReference>
<dbReference type="FunCoup" id="Q15438">
    <property type="interactions" value="2007"/>
</dbReference>
<dbReference type="IntAct" id="Q15438">
    <property type="interactions" value="48"/>
</dbReference>
<dbReference type="MINT" id="Q15438"/>
<dbReference type="STRING" id="9606.ENSP00000389095"/>
<dbReference type="iPTMnet" id="Q15438"/>
<dbReference type="PhosphoSitePlus" id="Q15438"/>
<dbReference type="BioMuta" id="CYTH1"/>
<dbReference type="DMDM" id="2498175"/>
<dbReference type="jPOST" id="Q15438"/>
<dbReference type="MassIVE" id="Q15438"/>
<dbReference type="PaxDb" id="9606-ENSP00000354398"/>
<dbReference type="PeptideAtlas" id="Q15438"/>
<dbReference type="ProteomicsDB" id="60597">
    <molecule id="Q15438-1"/>
</dbReference>
<dbReference type="ProteomicsDB" id="60598">
    <molecule id="Q15438-2"/>
</dbReference>
<dbReference type="ProteomicsDB" id="6366"/>
<dbReference type="Pumba" id="Q15438"/>
<dbReference type="Antibodypedia" id="19745">
    <property type="antibodies" value="256 antibodies from 32 providers"/>
</dbReference>
<dbReference type="DNASU" id="9267"/>
<dbReference type="Ensembl" id="ENST00000446868.8">
    <molecule id="Q15438-1"/>
    <property type="protein sequence ID" value="ENSP00000389095.3"/>
    <property type="gene ID" value="ENSG00000108669.18"/>
</dbReference>
<dbReference type="Ensembl" id="ENST00000585509.5">
    <molecule id="Q15438-3"/>
    <property type="protein sequence ID" value="ENSP00000465940.1"/>
    <property type="gene ID" value="ENSG00000108669.18"/>
</dbReference>
<dbReference type="Ensembl" id="ENST00000589297.5">
    <molecule id="Q15438-3"/>
    <property type="protein sequence ID" value="ENSP00000466512.1"/>
    <property type="gene ID" value="ENSG00000108669.18"/>
</dbReference>
<dbReference type="Ensembl" id="ENST00000591455.5">
    <molecule id="Q15438-2"/>
    <property type="protein sequence ID" value="ENSP00000465665.1"/>
    <property type="gene ID" value="ENSG00000108669.18"/>
</dbReference>
<dbReference type="GeneID" id="9267"/>
<dbReference type="KEGG" id="hsa:9267"/>
<dbReference type="MANE-Select" id="ENST00000446868.8">
    <property type="protein sequence ID" value="ENSP00000389095.3"/>
    <property type="RefSeq nucleotide sequence ID" value="NM_004762.6"/>
    <property type="RefSeq protein sequence ID" value="NP_004753.1"/>
</dbReference>
<dbReference type="UCSC" id="uc002jvw.4">
    <molecule id="Q15438-1"/>
    <property type="organism name" value="human"/>
</dbReference>
<dbReference type="AGR" id="HGNC:9501"/>
<dbReference type="CTD" id="9267"/>
<dbReference type="DisGeNET" id="9267"/>
<dbReference type="GeneCards" id="CYTH1"/>
<dbReference type="HGNC" id="HGNC:9501">
    <property type="gene designation" value="CYTH1"/>
</dbReference>
<dbReference type="HPA" id="ENSG00000108669">
    <property type="expression patterns" value="Low tissue specificity"/>
</dbReference>
<dbReference type="MIM" id="182115">
    <property type="type" value="gene"/>
</dbReference>
<dbReference type="neXtProt" id="NX_Q15438"/>
<dbReference type="OpenTargets" id="ENSG00000108669"/>
<dbReference type="PharmGKB" id="PA164718528"/>
<dbReference type="VEuPathDB" id="HostDB:ENSG00000108669"/>
<dbReference type="eggNOG" id="KOG0930">
    <property type="taxonomic scope" value="Eukaryota"/>
</dbReference>
<dbReference type="GeneTree" id="ENSGT00940000157519"/>
<dbReference type="HOGENOM" id="CLU_032820_3_0_1"/>
<dbReference type="InParanoid" id="Q15438"/>
<dbReference type="OMA" id="SCIMLNT"/>
<dbReference type="OrthoDB" id="430364at2759"/>
<dbReference type="PAN-GO" id="Q15438">
    <property type="GO annotations" value="0 GO annotations based on evolutionary models"/>
</dbReference>
<dbReference type="PhylomeDB" id="Q15438"/>
<dbReference type="TreeFam" id="TF352091"/>
<dbReference type="PathwayCommons" id="Q15438"/>
<dbReference type="Reactome" id="R-HSA-6811438">
    <property type="pathway name" value="Intra-Golgi traffic"/>
</dbReference>
<dbReference type="SignaLink" id="Q15438"/>
<dbReference type="SIGNOR" id="Q15438"/>
<dbReference type="BioGRID-ORCS" id="9267">
    <property type="hits" value="24 hits in 1156 CRISPR screens"/>
</dbReference>
<dbReference type="ChiTaRS" id="CYTH1">
    <property type="organism name" value="human"/>
</dbReference>
<dbReference type="EvolutionaryTrace" id="Q15438"/>
<dbReference type="GeneWiki" id="CYTH1"/>
<dbReference type="GenomeRNAi" id="9267"/>
<dbReference type="Pharos" id="Q15438">
    <property type="development level" value="Tbio"/>
</dbReference>
<dbReference type="PRO" id="PR:Q15438"/>
<dbReference type="Proteomes" id="UP000005640">
    <property type="component" value="Chromosome 17"/>
</dbReference>
<dbReference type="RNAct" id="Q15438">
    <property type="molecule type" value="protein"/>
</dbReference>
<dbReference type="Bgee" id="ENSG00000108669">
    <property type="expression patterns" value="Expressed in granulocyte and 198 other cell types or tissues"/>
</dbReference>
<dbReference type="ExpressionAtlas" id="Q15438">
    <property type="expression patterns" value="baseline and differential"/>
</dbReference>
<dbReference type="GO" id="GO:0005912">
    <property type="term" value="C:adherens junction"/>
    <property type="evidence" value="ECO:0007669"/>
    <property type="project" value="UniProtKB-SubCell"/>
</dbReference>
<dbReference type="GO" id="GO:0005923">
    <property type="term" value="C:bicellular tight junction"/>
    <property type="evidence" value="ECO:0000250"/>
    <property type="project" value="UniProtKB"/>
</dbReference>
<dbReference type="GO" id="GO:0005737">
    <property type="term" value="C:cytoplasm"/>
    <property type="evidence" value="ECO:0000314"/>
    <property type="project" value="MGI"/>
</dbReference>
<dbReference type="GO" id="GO:0009898">
    <property type="term" value="C:cytoplasmic side of plasma membrane"/>
    <property type="evidence" value="ECO:0000250"/>
    <property type="project" value="UniProtKB"/>
</dbReference>
<dbReference type="GO" id="GO:0005829">
    <property type="term" value="C:cytosol"/>
    <property type="evidence" value="ECO:0000250"/>
    <property type="project" value="UniProtKB"/>
</dbReference>
<dbReference type="GO" id="GO:0000139">
    <property type="term" value="C:Golgi membrane"/>
    <property type="evidence" value="ECO:0000304"/>
    <property type="project" value="Reactome"/>
</dbReference>
<dbReference type="GO" id="GO:0005886">
    <property type="term" value="C:plasma membrane"/>
    <property type="evidence" value="ECO:0000314"/>
    <property type="project" value="UniProtKB"/>
</dbReference>
<dbReference type="GO" id="GO:0005085">
    <property type="term" value="F:guanyl-nucleotide exchange factor activity"/>
    <property type="evidence" value="ECO:0000314"/>
    <property type="project" value="UniProtKB"/>
</dbReference>
<dbReference type="GO" id="GO:0008289">
    <property type="term" value="F:lipid binding"/>
    <property type="evidence" value="ECO:0007669"/>
    <property type="project" value="UniProtKB-KW"/>
</dbReference>
<dbReference type="GO" id="GO:0090162">
    <property type="term" value="P:establishment of epithelial cell polarity"/>
    <property type="evidence" value="ECO:0000250"/>
    <property type="project" value="UniProtKB"/>
</dbReference>
<dbReference type="GO" id="GO:0032012">
    <property type="term" value="P:regulation of ARF protein signal transduction"/>
    <property type="evidence" value="ECO:0007669"/>
    <property type="project" value="InterPro"/>
</dbReference>
<dbReference type="GO" id="GO:0030155">
    <property type="term" value="P:regulation of cell adhesion"/>
    <property type="evidence" value="ECO:0000314"/>
    <property type="project" value="MGI"/>
</dbReference>
<dbReference type="GO" id="GO:0016192">
    <property type="term" value="P:vesicle-mediated transport"/>
    <property type="evidence" value="ECO:0000304"/>
    <property type="project" value="ProtInc"/>
</dbReference>
<dbReference type="CDD" id="cd01252">
    <property type="entry name" value="PH_GRP1-like"/>
    <property type="match status" value="1"/>
</dbReference>
<dbReference type="CDD" id="cd00171">
    <property type="entry name" value="Sec7"/>
    <property type="match status" value="1"/>
</dbReference>
<dbReference type="FunFam" id="1.10.1000.11:FF:000002">
    <property type="entry name" value="Cytohesin 1"/>
    <property type="match status" value="1"/>
</dbReference>
<dbReference type="FunFam" id="1.10.220.20:FF:000003">
    <property type="entry name" value="Cytohesin 1"/>
    <property type="match status" value="1"/>
</dbReference>
<dbReference type="FunFam" id="2.30.29.30:FF:000009">
    <property type="entry name" value="Cytohesin 1"/>
    <property type="match status" value="1"/>
</dbReference>
<dbReference type="Gene3D" id="1.10.220.20">
    <property type="match status" value="1"/>
</dbReference>
<dbReference type="Gene3D" id="1.10.1000.11">
    <property type="entry name" value="Arf Nucleotide-binding Site Opener,domain 2"/>
    <property type="match status" value="1"/>
</dbReference>
<dbReference type="Gene3D" id="2.30.29.30">
    <property type="entry name" value="Pleckstrin-homology domain (PH domain)/Phosphotyrosine-binding domain (PTB)"/>
    <property type="match status" value="1"/>
</dbReference>
<dbReference type="InterPro" id="IPR011993">
    <property type="entry name" value="PH-like_dom_sf"/>
</dbReference>
<dbReference type="InterPro" id="IPR001849">
    <property type="entry name" value="PH_domain"/>
</dbReference>
<dbReference type="InterPro" id="IPR023394">
    <property type="entry name" value="Sec7_C_sf"/>
</dbReference>
<dbReference type="InterPro" id="IPR000904">
    <property type="entry name" value="Sec7_dom"/>
</dbReference>
<dbReference type="InterPro" id="IPR035999">
    <property type="entry name" value="Sec7_dom_sf"/>
</dbReference>
<dbReference type="PANTHER" id="PTHR10663:SF340">
    <property type="entry name" value="CYTOHESIN-1"/>
    <property type="match status" value="1"/>
</dbReference>
<dbReference type="PANTHER" id="PTHR10663">
    <property type="entry name" value="GUANYL-NUCLEOTIDE EXCHANGE FACTOR"/>
    <property type="match status" value="1"/>
</dbReference>
<dbReference type="Pfam" id="PF00169">
    <property type="entry name" value="PH"/>
    <property type="match status" value="1"/>
</dbReference>
<dbReference type="Pfam" id="PF01369">
    <property type="entry name" value="Sec7"/>
    <property type="match status" value="1"/>
</dbReference>
<dbReference type="SMART" id="SM00233">
    <property type="entry name" value="PH"/>
    <property type="match status" value="1"/>
</dbReference>
<dbReference type="SMART" id="SM00222">
    <property type="entry name" value="Sec7"/>
    <property type="match status" value="1"/>
</dbReference>
<dbReference type="SUPFAM" id="SSF50729">
    <property type="entry name" value="PH domain-like"/>
    <property type="match status" value="1"/>
</dbReference>
<dbReference type="SUPFAM" id="SSF48425">
    <property type="entry name" value="Sec7 domain"/>
    <property type="match status" value="1"/>
</dbReference>
<dbReference type="PROSITE" id="PS50003">
    <property type="entry name" value="PH_DOMAIN"/>
    <property type="match status" value="1"/>
</dbReference>
<dbReference type="PROSITE" id="PS50190">
    <property type="entry name" value="SEC7"/>
    <property type="match status" value="1"/>
</dbReference>
<keyword id="KW-0002">3D-structure</keyword>
<keyword id="KW-0007">Acetylation</keyword>
<keyword id="KW-0025">Alternative splicing</keyword>
<keyword id="KW-0965">Cell junction</keyword>
<keyword id="KW-1003">Cell membrane</keyword>
<keyword id="KW-0175">Coiled coil</keyword>
<keyword id="KW-0963">Cytoplasm</keyword>
<keyword id="KW-0344">Guanine-nucleotide releasing factor</keyword>
<keyword id="KW-0446">Lipid-binding</keyword>
<keyword id="KW-0472">Membrane</keyword>
<keyword id="KW-1267">Proteomics identification</keyword>
<keyword id="KW-1185">Reference proteome</keyword>
<keyword id="KW-0796">Tight junction</keyword>
<keyword id="KW-0832">Ubl conjugation</keyword>
<name>CYH1_HUMAN</name>
<reference key="1">
    <citation type="journal article" date="1992" name="Biochim. Biophys. Acta">
        <title>Cloning and sequencing of a human cDNA from cytolytic NK/T cells with homology to yeast SEC7.</title>
        <authorList>
            <person name="Liu L."/>
            <person name="Pohajdak B."/>
        </authorList>
    </citation>
    <scope>NUCLEOTIDE SEQUENCE [MRNA]</scope>
</reference>
<reference key="2">
    <citation type="journal article" date="2004" name="Nat. Genet.">
        <title>Complete sequencing and characterization of 21,243 full-length human cDNAs.</title>
        <authorList>
            <person name="Ota T."/>
            <person name="Suzuki Y."/>
            <person name="Nishikawa T."/>
            <person name="Otsuki T."/>
            <person name="Sugiyama T."/>
            <person name="Irie R."/>
            <person name="Wakamatsu A."/>
            <person name="Hayashi K."/>
            <person name="Sato H."/>
            <person name="Nagai K."/>
            <person name="Kimura K."/>
            <person name="Makita H."/>
            <person name="Sekine M."/>
            <person name="Obayashi M."/>
            <person name="Nishi T."/>
            <person name="Shibahara T."/>
            <person name="Tanaka T."/>
            <person name="Ishii S."/>
            <person name="Yamamoto J."/>
            <person name="Saito K."/>
            <person name="Kawai Y."/>
            <person name="Isono Y."/>
            <person name="Nakamura Y."/>
            <person name="Nagahari K."/>
            <person name="Murakami K."/>
            <person name="Yasuda T."/>
            <person name="Iwayanagi T."/>
            <person name="Wagatsuma M."/>
            <person name="Shiratori A."/>
            <person name="Sudo H."/>
            <person name="Hosoiri T."/>
            <person name="Kaku Y."/>
            <person name="Kodaira H."/>
            <person name="Kondo H."/>
            <person name="Sugawara M."/>
            <person name="Takahashi M."/>
            <person name="Kanda K."/>
            <person name="Yokoi T."/>
            <person name="Furuya T."/>
            <person name="Kikkawa E."/>
            <person name="Omura Y."/>
            <person name="Abe K."/>
            <person name="Kamihara K."/>
            <person name="Katsuta N."/>
            <person name="Sato K."/>
            <person name="Tanikawa M."/>
            <person name="Yamazaki M."/>
            <person name="Ninomiya K."/>
            <person name="Ishibashi T."/>
            <person name="Yamashita H."/>
            <person name="Murakawa K."/>
            <person name="Fujimori K."/>
            <person name="Tanai H."/>
            <person name="Kimata M."/>
            <person name="Watanabe M."/>
            <person name="Hiraoka S."/>
            <person name="Chiba Y."/>
            <person name="Ishida S."/>
            <person name="Ono Y."/>
            <person name="Takiguchi S."/>
            <person name="Watanabe S."/>
            <person name="Yosida M."/>
            <person name="Hotuta T."/>
            <person name="Kusano J."/>
            <person name="Kanehori K."/>
            <person name="Takahashi-Fujii A."/>
            <person name="Hara H."/>
            <person name="Tanase T.-O."/>
            <person name="Nomura Y."/>
            <person name="Togiya S."/>
            <person name="Komai F."/>
            <person name="Hara R."/>
            <person name="Takeuchi K."/>
            <person name="Arita M."/>
            <person name="Imose N."/>
            <person name="Musashino K."/>
            <person name="Yuuki H."/>
            <person name="Oshima A."/>
            <person name="Sasaki N."/>
            <person name="Aotsuka S."/>
            <person name="Yoshikawa Y."/>
            <person name="Matsunawa H."/>
            <person name="Ichihara T."/>
            <person name="Shiohata N."/>
            <person name="Sano S."/>
            <person name="Moriya S."/>
            <person name="Momiyama H."/>
            <person name="Satoh N."/>
            <person name="Takami S."/>
            <person name="Terashima Y."/>
            <person name="Suzuki O."/>
            <person name="Nakagawa S."/>
            <person name="Senoh A."/>
            <person name="Mizoguchi H."/>
            <person name="Goto Y."/>
            <person name="Shimizu F."/>
            <person name="Wakebe H."/>
            <person name="Hishigaki H."/>
            <person name="Watanabe T."/>
            <person name="Sugiyama A."/>
            <person name="Takemoto M."/>
            <person name="Kawakami B."/>
            <person name="Yamazaki M."/>
            <person name="Watanabe K."/>
            <person name="Kumagai A."/>
            <person name="Itakura S."/>
            <person name="Fukuzumi Y."/>
            <person name="Fujimori Y."/>
            <person name="Komiyama M."/>
            <person name="Tashiro H."/>
            <person name="Tanigami A."/>
            <person name="Fujiwara T."/>
            <person name="Ono T."/>
            <person name="Yamada K."/>
            <person name="Fujii Y."/>
            <person name="Ozaki K."/>
            <person name="Hirao M."/>
            <person name="Ohmori Y."/>
            <person name="Kawabata A."/>
            <person name="Hikiji T."/>
            <person name="Kobatake N."/>
            <person name="Inagaki H."/>
            <person name="Ikema Y."/>
            <person name="Okamoto S."/>
            <person name="Okitani R."/>
            <person name="Kawakami T."/>
            <person name="Noguchi S."/>
            <person name="Itoh T."/>
            <person name="Shigeta K."/>
            <person name="Senba T."/>
            <person name="Matsumura K."/>
            <person name="Nakajima Y."/>
            <person name="Mizuno T."/>
            <person name="Morinaga M."/>
            <person name="Sasaki M."/>
            <person name="Togashi T."/>
            <person name="Oyama M."/>
            <person name="Hata H."/>
            <person name="Watanabe M."/>
            <person name="Komatsu T."/>
            <person name="Mizushima-Sugano J."/>
            <person name="Satoh T."/>
            <person name="Shirai Y."/>
            <person name="Takahashi Y."/>
            <person name="Nakagawa K."/>
            <person name="Okumura K."/>
            <person name="Nagase T."/>
            <person name="Nomura N."/>
            <person name="Kikuchi H."/>
            <person name="Masuho Y."/>
            <person name="Yamashita R."/>
            <person name="Nakai K."/>
            <person name="Yada T."/>
            <person name="Nakamura Y."/>
            <person name="Ohara O."/>
            <person name="Isogai T."/>
            <person name="Sugano S."/>
        </authorList>
    </citation>
    <scope>NUCLEOTIDE SEQUENCE [LARGE SCALE MRNA] (ISOFORM 3)</scope>
    <source>
        <tissue>Cerebellum</tissue>
    </source>
</reference>
<reference key="3">
    <citation type="journal article" date="2006" name="Nature">
        <title>DNA sequence of human chromosome 17 and analysis of rearrangement in the human lineage.</title>
        <authorList>
            <person name="Zody M.C."/>
            <person name="Garber M."/>
            <person name="Adams D.J."/>
            <person name="Sharpe T."/>
            <person name="Harrow J."/>
            <person name="Lupski J.R."/>
            <person name="Nicholson C."/>
            <person name="Searle S.M."/>
            <person name="Wilming L."/>
            <person name="Young S.K."/>
            <person name="Abouelleil A."/>
            <person name="Allen N.R."/>
            <person name="Bi W."/>
            <person name="Bloom T."/>
            <person name="Borowsky M.L."/>
            <person name="Bugalter B.E."/>
            <person name="Butler J."/>
            <person name="Chang J.L."/>
            <person name="Chen C.-K."/>
            <person name="Cook A."/>
            <person name="Corum B."/>
            <person name="Cuomo C.A."/>
            <person name="de Jong P.J."/>
            <person name="DeCaprio D."/>
            <person name="Dewar K."/>
            <person name="FitzGerald M."/>
            <person name="Gilbert J."/>
            <person name="Gibson R."/>
            <person name="Gnerre S."/>
            <person name="Goldstein S."/>
            <person name="Grafham D.V."/>
            <person name="Grocock R."/>
            <person name="Hafez N."/>
            <person name="Hagopian D.S."/>
            <person name="Hart E."/>
            <person name="Norman C.H."/>
            <person name="Humphray S."/>
            <person name="Jaffe D.B."/>
            <person name="Jones M."/>
            <person name="Kamal M."/>
            <person name="Khodiyar V.K."/>
            <person name="LaButti K."/>
            <person name="Laird G."/>
            <person name="Lehoczky J."/>
            <person name="Liu X."/>
            <person name="Lokyitsang T."/>
            <person name="Loveland J."/>
            <person name="Lui A."/>
            <person name="Macdonald P."/>
            <person name="Major J.E."/>
            <person name="Matthews L."/>
            <person name="Mauceli E."/>
            <person name="McCarroll S.A."/>
            <person name="Mihalev A.H."/>
            <person name="Mudge J."/>
            <person name="Nguyen C."/>
            <person name="Nicol R."/>
            <person name="O'Leary S.B."/>
            <person name="Osoegawa K."/>
            <person name="Schwartz D.C."/>
            <person name="Shaw-Smith C."/>
            <person name="Stankiewicz P."/>
            <person name="Steward C."/>
            <person name="Swarbreck D."/>
            <person name="Venkataraman V."/>
            <person name="Whittaker C.A."/>
            <person name="Yang X."/>
            <person name="Zimmer A.R."/>
            <person name="Bradley A."/>
            <person name="Hubbard T."/>
            <person name="Birren B.W."/>
            <person name="Rogers J."/>
            <person name="Lander E.S."/>
            <person name="Nusbaum C."/>
        </authorList>
    </citation>
    <scope>NUCLEOTIDE SEQUENCE [LARGE SCALE GENOMIC DNA]</scope>
</reference>
<reference key="4">
    <citation type="journal article" date="2004" name="Genome Res.">
        <title>The status, quality, and expansion of the NIH full-length cDNA project: the Mammalian Gene Collection (MGC).</title>
        <authorList>
            <consortium name="The MGC Project Team"/>
        </authorList>
    </citation>
    <scope>NUCLEOTIDE SEQUENCE [LARGE SCALE MRNA] (ISOFORM 1)</scope>
    <source>
        <tissue>Skin</tissue>
        <tissue>Testis</tissue>
    </source>
</reference>
<reference key="5">
    <citation type="journal article" date="2000" name="J. Biol. Chem.">
        <title>Similarities in function and gene structure of cytohesin-4 and cytohesin-1, guanine nucleotide-exchange proteins for ADP-ribosylation factors.</title>
        <authorList>
            <person name="Ogasawara M."/>
            <person name="Kim S.C."/>
            <person name="Adamik R."/>
            <person name="Togawa A."/>
            <person name="Ferrans V.J."/>
            <person name="Takeda K."/>
            <person name="Kirby M."/>
            <person name="Moss J."/>
            <person name="Vaughan M."/>
        </authorList>
    </citation>
    <scope>NUCLEOTIDE SEQUENCE [GENOMIC DNA] OF 9-398</scope>
    <scope>FUNCTION</scope>
    <scope>ALTERNATIVE SPLICING</scope>
</reference>
<reference key="6">
    <citation type="journal article" date="2000" name="J. Biol. Chem.">
        <title>Specific functional interaction of human cytohesin-1 and ADP-ribosylation factor domain protein (ARD1).</title>
        <authorList>
            <person name="Vitale N."/>
            <person name="Pacheco-Rodriguez G."/>
            <person name="Ferrans V.J."/>
            <person name="Riemenschneider W."/>
            <person name="Moss J."/>
            <person name="Vaughan M."/>
        </authorList>
    </citation>
    <scope>INTERACTION WITH TRIM23</scope>
</reference>
<reference key="7">
    <citation type="journal article" date="2002" name="Proc. Natl. Acad. Sci. U.S.A.">
        <title>Cybr, a cytokine-inducible protein that binds cytohesin-1 and regulates its activity.</title>
        <authorList>
            <person name="Tang P."/>
            <person name="Cheng T.P."/>
            <person name="Agnello D."/>
            <person name="Wu C.-Y."/>
            <person name="Hissong B.D."/>
            <person name="Watford W.T."/>
            <person name="Ahn H.-J."/>
            <person name="Galon J."/>
            <person name="Moss J."/>
            <person name="Vaughan M."/>
            <person name="O'Shea J.J."/>
            <person name="Gadina M."/>
        </authorList>
    </citation>
    <scope>INTERACTION WITH CYTIP</scope>
</reference>
<reference key="8">
    <citation type="journal article" date="2007" name="Curr. Biol.">
        <title>The Arl4 family of small G proteins can recruit the cytohesin Arf6 exchange factors to the plasma membrane.</title>
        <authorList>
            <person name="Hofmann I."/>
            <person name="Thompson A."/>
            <person name="Sanderson C.M."/>
            <person name="Munro S."/>
        </authorList>
    </citation>
    <scope>SUBCELLULAR LOCATION</scope>
</reference>
<reference key="9">
    <citation type="journal article" date="2012" name="Proc. Natl. Acad. Sci. U.S.A.">
        <title>N-terminal acetylome analyses and functional insights of the N-terminal acetyltransferase NatB.</title>
        <authorList>
            <person name="Van Damme P."/>
            <person name="Lasa M."/>
            <person name="Polevoda B."/>
            <person name="Gazquez C."/>
            <person name="Elosegui-Artola A."/>
            <person name="Kim D.S."/>
            <person name="De Juan-Pardo E."/>
            <person name="Demeyer K."/>
            <person name="Hole K."/>
            <person name="Larrea E."/>
            <person name="Timmerman E."/>
            <person name="Prieto J."/>
            <person name="Arnesen T."/>
            <person name="Sherman F."/>
            <person name="Gevaert K."/>
            <person name="Aldabe R."/>
        </authorList>
    </citation>
    <scope>ACETYLATION [LARGE SCALE ANALYSIS] AT MET-1</scope>
    <scope>IDENTIFICATION BY MASS SPECTROMETRY [LARGE SCALE ANALYSIS]</scope>
</reference>
<reference key="10">
    <citation type="journal article" date="2018" name="Science">
        <title>C1orf106 is a colitis risk gene that regulates stability of epithelial adherens junctions.</title>
        <authorList>
            <person name="Mohanan V."/>
            <person name="Nakata T."/>
            <person name="Desch A.N."/>
            <person name="Levesque C."/>
            <person name="Boroughs A."/>
            <person name="Guzman G."/>
            <person name="Cao Z."/>
            <person name="Creasey E."/>
            <person name="Yao J."/>
            <person name="Boucher G."/>
            <person name="Charron G."/>
            <person name="Bhan A.K."/>
            <person name="Schenone M."/>
            <person name="Carr S.A."/>
            <person name="Reinecker H.C."/>
            <person name="Daly M.J."/>
            <person name="Rioux J.D."/>
            <person name="Lassen K.G."/>
            <person name="Xavier R.J."/>
        </authorList>
    </citation>
    <scope>INTERACTION WITH INAVA</scope>
    <scope>UBIQUITINATION</scope>
    <scope>FUNCTION</scope>
</reference>
<reference key="11">
    <citation type="journal article" date="1998" name="Proc. Natl. Acad. Sci. U.S.A.">
        <title>Solution structure of the cytohesin-1 (B2-1) Sec7 domain and its interaction with the GTPase ADP ribosylation factor 1.</title>
        <authorList>
            <person name="Betz S.F."/>
            <person name="Schnuchel A."/>
            <person name="Wang H."/>
            <person name="Olejniczak E.T."/>
            <person name="Meadows R.P."/>
            <person name="Lipsky B.P."/>
            <person name="Harris E.A."/>
            <person name="Staunton D.E."/>
            <person name="Fesik S.W."/>
        </authorList>
    </citation>
    <scope>STRUCTURE BY NMR OF 58-256</scope>
    <scope>FUNCTION</scope>
    <scope>MUTAGENESIS OF GLU-157; TYR-187 AND MET-195</scope>
</reference>
<organism>
    <name type="scientific">Homo sapiens</name>
    <name type="common">Human</name>
    <dbReference type="NCBI Taxonomy" id="9606"/>
    <lineage>
        <taxon>Eukaryota</taxon>
        <taxon>Metazoa</taxon>
        <taxon>Chordata</taxon>
        <taxon>Craniata</taxon>
        <taxon>Vertebrata</taxon>
        <taxon>Euteleostomi</taxon>
        <taxon>Mammalia</taxon>
        <taxon>Eutheria</taxon>
        <taxon>Euarchontoglires</taxon>
        <taxon>Primates</taxon>
        <taxon>Haplorrhini</taxon>
        <taxon>Catarrhini</taxon>
        <taxon>Hominidae</taxon>
        <taxon>Homo</taxon>
    </lineage>
</organism>
<feature type="chain" id="PRO_0000120194" description="Cytohesin-1">
    <location>
        <begin position="1"/>
        <end position="398"/>
    </location>
</feature>
<feature type="domain" description="SEC7" evidence="5">
    <location>
        <begin position="73"/>
        <end position="202"/>
    </location>
</feature>
<feature type="domain" description="PH" evidence="4">
    <location>
        <begin position="260"/>
        <end position="377"/>
    </location>
</feature>
<feature type="region of interest" description="C-terminal autoinhibitory region" evidence="1">
    <location>
        <begin position="388"/>
        <end position="396"/>
    </location>
</feature>
<feature type="coiled-coil region" evidence="3">
    <location>
        <begin position="10"/>
        <end position="67"/>
    </location>
</feature>
<feature type="binding site" evidence="1">
    <location>
        <begin position="269"/>
        <end position="277"/>
    </location>
    <ligand>
        <name>a 1,2-diacyl-sn-glycero-3-phospho-(1D-myo-inositol-3,4,5-trisphosphate)</name>
        <dbReference type="ChEBI" id="CHEBI:57836"/>
    </ligand>
</feature>
<feature type="binding site" evidence="1">
    <location>
        <position position="281"/>
    </location>
    <ligand>
        <name>a 1,2-diacyl-sn-glycero-3-phospho-(1D-myo-inositol-3,4,5-trisphosphate)</name>
        <dbReference type="ChEBI" id="CHEBI:57836"/>
    </ligand>
</feature>
<feature type="binding site" evidence="1">
    <location>
        <position position="292"/>
    </location>
    <ligand>
        <name>a 1,2-diacyl-sn-glycero-3-phospho-(1D-myo-inositol-3,4,5-trisphosphate)</name>
        <dbReference type="ChEBI" id="CHEBI:57836"/>
    </ligand>
</feature>
<feature type="binding site" evidence="1">
    <location>
        <position position="302"/>
    </location>
    <ligand>
        <name>a 1,2-diacyl-sn-glycero-3-phospho-(1D-myo-inositol-3,4,5-trisphosphate)</name>
        <dbReference type="ChEBI" id="CHEBI:57836"/>
    </ligand>
</feature>
<feature type="binding site" evidence="1">
    <location>
        <position position="351"/>
    </location>
    <ligand>
        <name>a 1,2-diacyl-sn-glycero-3-phospho-(1D-myo-inositol-3,4,5-trisphosphate)</name>
        <dbReference type="ChEBI" id="CHEBI:57836"/>
    </ligand>
</feature>
<feature type="modified residue" description="N-acetylmethionine" evidence="15">
    <location>
        <position position="1"/>
    </location>
</feature>
<feature type="splice variant" id="VSP_055884" description="In isoform 3." evidence="12">
    <location>
        <begin position="1"/>
        <end position="59"/>
    </location>
</feature>
<feature type="splice variant" id="VSP_006034" description="In isoform 2." evidence="13">
    <location>
        <position position="273"/>
    </location>
</feature>
<feature type="mutagenesis site" description="Reduces guanine exchange factor activity by over 90%." evidence="11">
    <original>E</original>
    <variation>A</variation>
    <variation>K</variation>
    <location>
        <position position="157"/>
    </location>
</feature>
<feature type="mutagenesis site" description="Reduces guanine exchange factor activity by over 90%." evidence="11">
    <original>Y</original>
    <variation>A</variation>
    <location>
        <position position="187"/>
    </location>
</feature>
<feature type="mutagenesis site" description="Reduces guanine exchange factor activity by over 90%." evidence="11">
    <original>M</original>
    <variation>A</variation>
    <location>
        <position position="195"/>
    </location>
</feature>
<feature type="sequence conflict" description="In Ref. 4; AAF37737/AAF37738." evidence="13" ref="4">
    <original>TVYRISAPT</original>
    <variation>MFTGSQLRR</variation>
    <location>
        <begin position="353"/>
        <end position="361"/>
    </location>
</feature>
<feature type="helix" evidence="17">
    <location>
        <begin position="64"/>
        <end position="75"/>
    </location>
</feature>
<feature type="helix" evidence="17">
    <location>
        <begin position="77"/>
        <end position="86"/>
    </location>
</feature>
<feature type="helix" evidence="17">
    <location>
        <begin position="94"/>
        <end position="103"/>
    </location>
</feature>
<feature type="helix" evidence="17">
    <location>
        <begin position="109"/>
        <end position="116"/>
    </location>
</feature>
<feature type="helix" evidence="17">
    <location>
        <begin position="121"/>
        <end position="133"/>
    </location>
</feature>
<feature type="turn" evidence="16">
    <location>
        <begin position="137"/>
        <end position="139"/>
    </location>
</feature>
<feature type="helix" evidence="17">
    <location>
        <begin position="141"/>
        <end position="150"/>
    </location>
</feature>
<feature type="helix" evidence="17">
    <location>
        <begin position="158"/>
        <end position="175"/>
    </location>
</feature>
<feature type="helix" evidence="17">
    <location>
        <begin position="183"/>
        <end position="201"/>
    </location>
</feature>
<feature type="strand" evidence="16">
    <location>
        <begin position="203"/>
        <end position="205"/>
    </location>
</feature>
<feature type="helix" evidence="17">
    <location>
        <begin position="211"/>
        <end position="217"/>
    </location>
</feature>
<feature type="turn" evidence="17">
    <location>
        <begin position="218"/>
        <end position="221"/>
    </location>
</feature>
<feature type="helix" evidence="17">
    <location>
        <begin position="229"/>
        <end position="241"/>
    </location>
</feature>
<feature type="strand" evidence="16">
    <location>
        <begin position="246"/>
        <end position="248"/>
    </location>
</feature>
<gene>
    <name evidence="14" type="primary">CYTH1</name>
    <name type="synonym">D17S811E</name>
    <name type="synonym">PSCD1</name>
</gene>
<comment type="function">
    <text evidence="2 6 10 11">Promotes guanine-nucleotide exchange on ARF1, ARF5 and ARF6. Promotes the activation of ARF factors through replacement of GDP with GTP. Plays an important role in membrane trafficking, during junctional remodeling and epithelial polarization, through regulation of ARF6 activity.</text>
</comment>
<comment type="subunit">
    <text evidence="2 7 8 10">Interacts with TRIM23 and CYTIP (PubMed:10748148, PubMed:11867758). Interacts (via coiled-coil domain) with FRMD4A (via coiled-coil domain) (By similarity). Interacts with FRMD4B (By similarity). Found in a complex with PARD3, CYTH1 and FRMD4A (By similarity). Interacts (via N-terminal domain) with INAVA (via N-terminal domain) (PubMed:29420262).</text>
</comment>
<comment type="interaction">
    <interactant intactId="EBI-997830">
        <id>Q15438</id>
    </interactant>
    <interactant intactId="EBI-296087">
        <id>P31749</id>
        <label>AKT1</label>
    </interactant>
    <organismsDiffer>false</organismsDiffer>
    <experiments>3</experiments>
</comment>
<comment type="interaction">
    <interactant intactId="EBI-997830">
        <id>Q15438</id>
    </interactant>
    <interactant intactId="EBI-2606935">
        <id>Q96BI3</id>
        <label>APH1A</label>
    </interactant>
    <organismsDiffer>false</organismsDiffer>
    <experiments>3</experiments>
</comment>
<comment type="interaction">
    <interactant intactId="EBI-997830">
        <id>Q15438</id>
    </interactant>
    <interactant intactId="EBI-12275524">
        <id>P23560-2</id>
        <label>BDNF</label>
    </interactant>
    <organismsDiffer>false</organismsDiffer>
    <experiments>3</experiments>
</comment>
<comment type="interaction">
    <interactant intactId="EBI-997830">
        <id>Q15438</id>
    </interactant>
    <interactant intactId="EBI-740135">
        <id>P35520</id>
        <label>CBS</label>
    </interactant>
    <organismsDiffer>false</organismsDiffer>
    <experiments>3</experiments>
</comment>
<comment type="interaction">
    <interactant intactId="EBI-997830">
        <id>Q15438</id>
    </interactant>
    <interactant intactId="EBI-744556">
        <id>Q96HB5</id>
        <label>CCDC120</label>
    </interactant>
    <organismsDiffer>false</organismsDiffer>
    <experiments>12</experiments>
</comment>
<comment type="interaction">
    <interactant intactId="EBI-997830">
        <id>Q15438</id>
    </interactant>
    <interactant intactId="EBI-741671">
        <id>Q969H4</id>
        <label>CNKSR1</label>
    </interactant>
    <organismsDiffer>false</organismsDiffer>
    <experiments>6</experiments>
</comment>
<comment type="interaction">
    <interactant intactId="EBI-997830">
        <id>Q15438</id>
    </interactant>
    <interactant intactId="EBI-997814">
        <id>O60759</id>
        <label>CYTIP</label>
    </interactant>
    <organismsDiffer>false</organismsDiffer>
    <experiments>8</experiments>
</comment>
<comment type="interaction">
    <interactant intactId="EBI-997830">
        <id>Q15438</id>
    </interactant>
    <interactant intactId="EBI-12836320">
        <id>Q92915-2</id>
        <label>FGF14</label>
    </interactant>
    <organismsDiffer>false</organismsDiffer>
    <experiments>3</experiments>
</comment>
<comment type="interaction">
    <interactant intactId="EBI-997830">
        <id>Q15438</id>
    </interactant>
    <interactant intactId="EBI-3893419">
        <id>P15408</id>
        <label>FOSL2</label>
    </interactant>
    <organismsDiffer>false</organismsDiffer>
    <experiments>3</experiments>
</comment>
<comment type="interaction">
    <interactant intactId="EBI-997830">
        <id>Q15438</id>
    </interactant>
    <interactant intactId="EBI-296047">
        <id>P07900</id>
        <label>HSP90AA1</label>
    </interactant>
    <organismsDiffer>false</organismsDiffer>
    <experiments>3</experiments>
</comment>
<comment type="interaction">
    <interactant intactId="EBI-997830">
        <id>Q15438</id>
    </interactant>
    <interactant intactId="EBI-7545562">
        <id>Q3KP66</id>
        <label>INAVA</label>
    </interactant>
    <organismsDiffer>false</organismsDiffer>
    <experiments>8</experiments>
</comment>
<comment type="interaction">
    <interactant intactId="EBI-997830">
        <id>Q15438</id>
    </interactant>
    <interactant intactId="EBI-52354453">
        <id>Q3KP66-1</id>
        <label>INAVA</label>
    </interactant>
    <organismsDiffer>false</organismsDiffer>
    <experiments>4</experiments>
</comment>
<comment type="interaction">
    <interactant intactId="EBI-997830">
        <id>Q15438</id>
    </interactant>
    <interactant intactId="EBI-4401965">
        <id>Q8WWN9</id>
        <label>IPCEF1</label>
    </interactant>
    <organismsDiffer>false</organismsDiffer>
    <experiments>8</experiments>
</comment>
<comment type="interaction">
    <interactant intactId="EBI-997830">
        <id>Q15438</id>
    </interactant>
    <interactant intactId="EBI-998468">
        <id>Q9NZ42</id>
        <label>PSENEN</label>
    </interactant>
    <organismsDiffer>false</organismsDiffer>
    <experiments>3</experiments>
</comment>
<comment type="interaction">
    <interactant intactId="EBI-997830">
        <id>Q15438</id>
    </interactant>
    <interactant intactId="EBI-12004298">
        <id>O75971-2</id>
        <label>SNAPC5</label>
    </interactant>
    <organismsDiffer>false</organismsDiffer>
    <experiments>3</experiments>
</comment>
<comment type="interaction">
    <interactant intactId="EBI-997830">
        <id>Q15438</id>
    </interactant>
    <interactant intactId="EBI-357085">
        <id>Q9UNE7</id>
        <label>STUB1</label>
    </interactant>
    <organismsDiffer>false</organismsDiffer>
    <experiments>3</experiments>
</comment>
<comment type="subcellular location">
    <subcellularLocation>
        <location evidence="9">Cell membrane</location>
        <topology evidence="9">Peripheral membrane protein</topology>
    </subcellularLocation>
    <subcellularLocation>
        <location evidence="2">Cytoplasm</location>
        <location evidence="2">Cytosol</location>
    </subcellularLocation>
    <subcellularLocation>
        <location evidence="2">Cell junction</location>
        <location evidence="2">Tight junction</location>
    </subcellularLocation>
    <subcellularLocation>
        <location evidence="2">Cell junction</location>
        <location evidence="2">Adherens junction</location>
    </subcellularLocation>
    <text evidence="2">Colocalized with TJP1 during epithelial polarization.</text>
</comment>
<comment type="alternative products">
    <event type="alternative splicing"/>
    <isoform>
        <id>Q15438-1</id>
        <name>1</name>
        <sequence type="displayed"/>
    </isoform>
    <isoform>
        <id>Q15438-2</id>
        <name>2</name>
        <sequence type="described" ref="VSP_006034"/>
    </isoform>
    <isoform>
        <id>Q15438-3</id>
        <name>3</name>
        <sequence type="described" ref="VSP_055884"/>
    </isoform>
</comment>
<comment type="tissue specificity">
    <text>Ubiquitous.</text>
</comment>
<comment type="domain">
    <text evidence="1">Binds via its PH domain to the inositol head group of phosphatidylinositol 3,4,5-trisphosphate.</text>
</comment>
<comment type="domain">
    <text evidence="2">Autoinhibited by its C-terminal basic region.</text>
</comment>
<comment type="PTM">
    <text evidence="10">Ubiquitinated by SCF(FBXW11) E3 ubiquitin-protein ligase complex. Ubiquitination induces proteasomal degradation.</text>
</comment>
<protein>
    <recommendedName>
        <fullName>Cytohesin-1</fullName>
    </recommendedName>
    <alternativeName>
        <fullName>PH, SEC7 and coiled-coil domain-containing protein 1</fullName>
    </alternativeName>
    <alternativeName>
        <fullName>SEC7 homolog B2-1</fullName>
    </alternativeName>
</protein>
<accession>Q15438</accession>
<accession>A6NFW7</accession>
<accession>B7Z1T4</accession>
<accession>Q9P123</accession>
<accession>Q9P124</accession>